<keyword id="KW-0002">3D-structure</keyword>
<keyword id="KW-0349">Heme</keyword>
<keyword id="KW-0408">Iron</keyword>
<keyword id="KW-0479">Metal-binding</keyword>
<keyword id="KW-0560">Oxidoreductase</keyword>
<keyword id="KW-1185">Reference proteome</keyword>
<keyword id="KW-0732">Signal</keyword>
<name>HAO_KUEST</name>
<comment type="function">
    <text evidence="4 5">Catalyzes the oxidation of hydroxylamine to nitric oxide with cytochrome c acting as an electron acceptor (PubMed:21964329, PubMed:24302732). Does not oxidize hydroxylamine to nitrite (PubMed:24302732). Also able to catalyze the four-electron oxidation of hydrazine to N(2) in vitro with reduced efficiency; however, this reaction is probably not physiological (PubMed:21964329, PubMed:24302732).</text>
</comment>
<comment type="catalytic activity">
    <reaction evidence="4 5">
        <text>hydroxylamine + 3 Fe(III)-[cytochrome c] = nitric oxide + 3 Fe(II)-[cytochrome c] + 3 H(+)</text>
        <dbReference type="Rhea" id="RHEA:45036"/>
        <dbReference type="Rhea" id="RHEA-COMP:10350"/>
        <dbReference type="Rhea" id="RHEA-COMP:14399"/>
        <dbReference type="ChEBI" id="CHEBI:15378"/>
        <dbReference type="ChEBI" id="CHEBI:15429"/>
        <dbReference type="ChEBI" id="CHEBI:16480"/>
        <dbReference type="ChEBI" id="CHEBI:29033"/>
        <dbReference type="ChEBI" id="CHEBI:29034"/>
        <dbReference type="EC" id="1.7.2.9"/>
    </reaction>
</comment>
<comment type="cofactor">
    <cofactor evidence="5 7">
        <name>heme c</name>
        <dbReference type="ChEBI" id="CHEBI:61717"/>
    </cofactor>
    <text evidence="5 7">Binds 8 heme c groups per subunit (PubMed:24302732, PubMed:26249351). One of them, heme-4, is an atypical heme c (unusual heme c binding motif CXXXXCH) and is called P460 (PubMed:24302732, PubMed:26249351). Catalysis takes place at heme-4/P460 (PubMed:24302732, PubMed:26249351). The other c-type hemes mediate electron transfer to the external electron acceptor, which is a cytochrome c-type protein (PubMed:24302732, PubMed:26249351).</text>
</comment>
<comment type="biophysicochemical properties">
    <kinetics>
        <KM evidence="5">4.4 uM for hydroxylamine (at 37 degrees Celsius)</KM>
        <KM evidence="5">54 uM for hydrazine (at 37 degrees Celsius)</KM>
        <Vmax evidence="5">4.8 umol/min/mg enzyme with hydroxylamine as substrate (at 37 degrees Celsius)</Vmax>
        <Vmax evidence="5">1.6 umol/min/mg enzyme with hydrazine as substrate (at 37 degrees Celsius)</Vmax>
        <text evidence="5">kcat is 15 sec(-1) with hydroxylamine as substrate (at 37 degrees Celsius) (PubMed:24302732). kcat is 4.9 sec(-1) with hydroxylamine as substrate (at 37 degrees Celsius) (PubMed:24302732).</text>
    </kinetics>
    <redoxPotential>
        <text evidence="5">E(0) is -300 mV for heme P460.</text>
    </redoxPotential>
</comment>
<comment type="subunit">
    <text evidence="5 6">Homotrimer; subunits are linked by two covalent bonds between Tyr-451 of one subunit and heme P460 of an adjacent subunit.</text>
</comment>
<comment type="subcellular location">
    <subcellularLocation>
        <location evidence="6">Anammoxosome</location>
    </subcellularLocation>
    <text evidence="6">Preferentially, localizes in the proximity of the anammoxosome membrane.</text>
</comment>
<proteinExistence type="evidence at protein level"/>
<evidence type="ECO:0000255" key="1">
    <source>
        <dbReference type="PIRSR" id="PIRSR000242-1"/>
    </source>
</evidence>
<evidence type="ECO:0000255" key="2">
    <source>
        <dbReference type="PIRSR" id="PIRSR000242-2"/>
    </source>
</evidence>
<evidence type="ECO:0000255" key="3">
    <source>
        <dbReference type="PROSITE-ProRule" id="PRU00303"/>
    </source>
</evidence>
<evidence type="ECO:0000269" key="4">
    <source>
    </source>
</evidence>
<evidence type="ECO:0000269" key="5">
    <source>
    </source>
</evidence>
<evidence type="ECO:0000269" key="6">
    <source>
    </source>
</evidence>
<evidence type="ECO:0000269" key="7">
    <source>
    </source>
</evidence>
<evidence type="ECO:0000303" key="8">
    <source>
    </source>
</evidence>
<evidence type="ECO:0000303" key="9">
    <source>
    </source>
</evidence>
<evidence type="ECO:0000305" key="10"/>
<evidence type="ECO:0000312" key="11">
    <source>
        <dbReference type="EMBL" id="CAJ71806.1"/>
    </source>
</evidence>
<evidence type="ECO:0000312" key="12">
    <source>
        <dbReference type="EMBL" id="MBW7941706.1"/>
    </source>
</evidence>
<evidence type="ECO:0000312" key="13">
    <source>
        <dbReference type="EMBL" id="QII13707.1"/>
    </source>
</evidence>
<evidence type="ECO:0000312" key="14">
    <source>
        <dbReference type="EMBL" id="SOH05157.1"/>
    </source>
</evidence>
<evidence type="ECO:0000312" key="15">
    <source>
        <dbReference type="Proteomes" id="UP000221734"/>
    </source>
</evidence>
<evidence type="ECO:0007744" key="16">
    <source>
        <dbReference type="PDB" id="4N4J"/>
    </source>
</evidence>
<evidence type="ECO:0007744" key="17">
    <source>
        <dbReference type="PDB" id="4N4K"/>
    </source>
</evidence>
<evidence type="ECO:0007744" key="18">
    <source>
        <dbReference type="PDB" id="4N4L"/>
    </source>
</evidence>
<evidence type="ECO:0007744" key="19">
    <source>
        <dbReference type="PDB" id="4N4M"/>
    </source>
</evidence>
<evidence type="ECO:0007744" key="20">
    <source>
        <dbReference type="PDB" id="4RWM"/>
    </source>
</evidence>
<evidence type="ECO:0007829" key="21">
    <source>
        <dbReference type="PDB" id="4N4J"/>
    </source>
</evidence>
<evidence type="ECO:0007829" key="22">
    <source>
        <dbReference type="PDB" id="4RWM"/>
    </source>
</evidence>
<organism evidence="11">
    <name type="scientific">Kuenenia stuttgartiensis</name>
    <dbReference type="NCBI Taxonomy" id="174633"/>
    <lineage>
        <taxon>Bacteria</taxon>
        <taxon>Pseudomonadati</taxon>
        <taxon>Planctomycetota</taxon>
        <taxon>Candidatus Brocadiia</taxon>
        <taxon>Candidatus Brocadiales</taxon>
        <taxon>Candidatus Brocadiaceae</taxon>
        <taxon>Candidatus Kuenenia</taxon>
    </lineage>
</organism>
<feature type="signal peptide" evidence="3">
    <location>
        <begin position="1"/>
        <end position="26"/>
    </location>
</feature>
<feature type="chain" id="PRO_5015097116" description="Hydroxylamine oxidoreductase" evidence="3">
    <location>
        <begin position="27"/>
        <end position="536"/>
    </location>
</feature>
<feature type="binding site" description="covalent" evidence="1 5 7 16 17 18 19 20">
    <location>
        <position position="116"/>
    </location>
    <ligand>
        <name>heme c</name>
        <dbReference type="ChEBI" id="CHEBI:61717"/>
        <label>1</label>
    </ligand>
</feature>
<feature type="binding site" description="covalent" evidence="1 5 7 16 17 18 19 20">
    <location>
        <position position="119"/>
    </location>
    <ligand>
        <name>heme c</name>
        <dbReference type="ChEBI" id="CHEBI:61717"/>
        <label>1</label>
    </ligand>
</feature>
<feature type="binding site" description="axial binding residue" evidence="2 5 7 16 17 18 19 20">
    <location>
        <position position="120"/>
    </location>
    <ligand>
        <name>heme c</name>
        <dbReference type="ChEBI" id="CHEBI:61717"/>
        <label>1</label>
    </ligand>
    <ligandPart>
        <name>Fe</name>
        <dbReference type="ChEBI" id="CHEBI:18248"/>
    </ligandPart>
</feature>
<feature type="binding site" description="axial binding residue" evidence="2 5 7 16 17 18 19 20">
    <location>
        <position position="136"/>
    </location>
    <ligand>
        <name>heme c</name>
        <dbReference type="ChEBI" id="CHEBI:61717"/>
        <label>3</label>
    </ligand>
    <ligandPart>
        <name>Fe</name>
        <dbReference type="ChEBI" id="CHEBI:18248"/>
    </ligandPart>
</feature>
<feature type="binding site" description="covalent" evidence="1 5 7 16 17 18 19 20">
    <location>
        <position position="160"/>
    </location>
    <ligand>
        <name>heme c</name>
        <dbReference type="ChEBI" id="CHEBI:61717"/>
        <label>2</label>
    </ligand>
</feature>
<feature type="binding site" description="covalent" evidence="1 5 7 16 17 18 19 20">
    <location>
        <position position="163"/>
    </location>
    <ligand>
        <name>heme c</name>
        <dbReference type="ChEBI" id="CHEBI:61717"/>
        <label>2</label>
    </ligand>
</feature>
<feature type="binding site" description="axial binding residue" evidence="2 5 7 16 17 18 19 20">
    <location>
        <position position="164"/>
    </location>
    <ligand>
        <name>heme c</name>
        <dbReference type="ChEBI" id="CHEBI:61717"/>
        <label>2</label>
    </ligand>
    <ligandPart>
        <name>Fe</name>
        <dbReference type="ChEBI" id="CHEBI:18248"/>
    </ligandPart>
</feature>
<feature type="binding site" description="axial binding residue" evidence="2 5 7 16 17 18 19 20">
    <location>
        <position position="168"/>
    </location>
    <ligand>
        <name>heme c</name>
        <dbReference type="ChEBI" id="CHEBI:61717"/>
        <label>1</label>
    </ligand>
    <ligandPart>
        <name>Fe</name>
        <dbReference type="ChEBI" id="CHEBI:18248"/>
    </ligandPart>
</feature>
<feature type="binding site" description="covalent" evidence="1 5 7 16 17 18 19 20">
    <location>
        <position position="179"/>
    </location>
    <ligand>
        <name>heme c</name>
        <dbReference type="ChEBI" id="CHEBI:61717"/>
        <label>3</label>
    </ligand>
</feature>
<feature type="binding site" description="covalent" evidence="1 5 7 16 17 18 19 20">
    <location>
        <position position="182"/>
    </location>
    <ligand>
        <name>heme c</name>
        <dbReference type="ChEBI" id="CHEBI:61717"/>
        <label>3</label>
    </ligand>
</feature>
<feature type="binding site" description="axial binding residue" evidence="2 5 7 16 17 18 19 20">
    <location>
        <position position="183"/>
    </location>
    <ligand>
        <name>heme c</name>
        <dbReference type="ChEBI" id="CHEBI:61717"/>
        <label>3</label>
    </ligand>
    <ligandPart>
        <name>Fe</name>
        <dbReference type="ChEBI" id="CHEBI:18248"/>
    </ligandPart>
</feature>
<feature type="binding site" description="axial binding residue" evidence="2 5 7 16 17 18 19 20">
    <location>
        <position position="198"/>
    </location>
    <ligand>
        <name>heme c</name>
        <dbReference type="ChEBI" id="CHEBI:61717"/>
        <label>6</label>
    </ligand>
    <ligandPart>
        <name>Fe</name>
        <dbReference type="ChEBI" id="CHEBI:18248"/>
    </ligandPart>
</feature>
<feature type="binding site" description="covalent" evidence="1 5 7 16 17 18 19 20">
    <location>
        <position position="223"/>
    </location>
    <ligand>
        <name>heme c</name>
        <dbReference type="ChEBI" id="CHEBI:61717"/>
        <label>4</label>
    </ligand>
</feature>
<feature type="binding site" description="covalent" evidence="1 5 7 16 17 18 19 20">
    <location>
        <position position="226"/>
    </location>
    <ligand>
        <name>heme c</name>
        <dbReference type="ChEBI" id="CHEBI:61717"/>
        <label>4</label>
    </ligand>
</feature>
<feature type="binding site" description="axial binding residue" evidence="2 5 7 16 17 18 19 20">
    <location>
        <position position="227"/>
    </location>
    <ligand>
        <name>heme c</name>
        <dbReference type="ChEBI" id="CHEBI:61717"/>
        <label>4</label>
    </ligand>
    <ligandPart>
        <name>Fe</name>
        <dbReference type="ChEBI" id="CHEBI:18248"/>
    </ligandPart>
</feature>
<feature type="binding site" description="covalent" evidence="1 5 7 16 17 18 19 20">
    <location>
        <position position="234"/>
    </location>
    <ligand>
        <name>heme c</name>
        <dbReference type="ChEBI" id="CHEBI:61717"/>
        <label>5</label>
    </ligand>
</feature>
<feature type="binding site" description="covalent" evidence="1 5 7 16 17 18 19 20">
    <location>
        <position position="237"/>
    </location>
    <ligand>
        <name>heme c</name>
        <dbReference type="ChEBI" id="CHEBI:61717"/>
        <label>5</label>
    </ligand>
</feature>
<feature type="binding site" description="axial binding residue" evidence="2 5 7 16 17 18 19 20">
    <location>
        <position position="238"/>
    </location>
    <ligand>
        <name>heme c</name>
        <dbReference type="ChEBI" id="CHEBI:61717"/>
        <label>5</label>
    </ligand>
    <ligandPart>
        <name>Fe</name>
        <dbReference type="ChEBI" id="CHEBI:18248"/>
    </ligandPart>
</feature>
<feature type="binding site" description="axial binding residue" evidence="2 5 7 16 17 18 19 20">
    <location>
        <position position="241"/>
    </location>
    <ligand>
        <name>heme c</name>
        <dbReference type="ChEBI" id="CHEBI:61717"/>
        <label>2</label>
    </ligand>
    <ligandPart>
        <name>Fe</name>
        <dbReference type="ChEBI" id="CHEBI:18248"/>
    </ligandPart>
</feature>
<feature type="binding site" description="covalent" evidence="1 5 7 16 17 18 19 20">
    <location>
        <position position="254"/>
    </location>
    <ligand>
        <name>heme c</name>
        <dbReference type="ChEBI" id="CHEBI:61717"/>
        <label>6</label>
    </ligand>
</feature>
<feature type="binding site" description="covalent" evidence="1 5 7 16 17 18 19 20">
    <location>
        <position position="257"/>
    </location>
    <ligand>
        <name>heme c</name>
        <dbReference type="ChEBI" id="CHEBI:61717"/>
        <label>6</label>
    </ligand>
</feature>
<feature type="binding site" description="axial binding residue" evidence="2 5 7 16 17 18 19 20">
    <location>
        <position position="258"/>
    </location>
    <ligand>
        <name>heme c</name>
        <dbReference type="ChEBI" id="CHEBI:61717"/>
        <label>6</label>
    </ligand>
    <ligandPart>
        <name>Fe</name>
        <dbReference type="ChEBI" id="CHEBI:18248"/>
    </ligandPart>
</feature>
<feature type="binding site" evidence="5 17">
    <location>
        <position position="263"/>
    </location>
    <ligand>
        <name>hydroxylamine</name>
        <dbReference type="ChEBI" id="CHEBI:15429"/>
    </ligand>
</feature>
<feature type="binding site" description="axial binding residue" evidence="2 5 7 16 17 18 19 20">
    <location>
        <position position="274"/>
    </location>
    <ligand>
        <name>heme c</name>
        <dbReference type="ChEBI" id="CHEBI:61717"/>
        <label>8</label>
    </ligand>
    <ligandPart>
        <name>Fe</name>
        <dbReference type="ChEBI" id="CHEBI:18248"/>
    </ligandPart>
</feature>
<feature type="binding site" description="covalent" evidence="1 5 7 16 17 18 19 20">
    <location>
        <position position="301"/>
    </location>
    <ligand>
        <name>heme c</name>
        <dbReference type="ChEBI" id="CHEBI:61717"/>
        <label>7</label>
    </ligand>
</feature>
<feature type="binding site" description="covalent" evidence="1 5 7 16 17 18 19 20">
    <location>
        <position position="304"/>
    </location>
    <ligand>
        <name>heme c</name>
        <dbReference type="ChEBI" id="CHEBI:61717"/>
        <label>7</label>
    </ligand>
</feature>
<feature type="binding site" description="axial binding residue" evidence="2 5 7 16 17 18 19 20">
    <location>
        <position position="305"/>
    </location>
    <ligand>
        <name>heme c</name>
        <dbReference type="ChEBI" id="CHEBI:61717"/>
        <label>7</label>
    </ligand>
    <ligandPart>
        <name>Fe</name>
        <dbReference type="ChEBI" id="CHEBI:18248"/>
    </ligandPart>
</feature>
<feature type="binding site" description="axial binding residue" evidence="2 5 7 16 17 18 19 20">
    <location>
        <position position="311"/>
    </location>
    <ligand>
        <name>heme c</name>
        <dbReference type="ChEBI" id="CHEBI:61717"/>
        <label>5</label>
    </ligand>
    <ligandPart>
        <name>Fe</name>
        <dbReference type="ChEBI" id="CHEBI:18248"/>
    </ligandPart>
</feature>
<feature type="binding site" description="covalent" evidence="1 5 7 16 17 18 19 20">
    <location>
        <position position="346"/>
    </location>
    <ligand>
        <name>heme c</name>
        <dbReference type="ChEBI" id="CHEBI:61717"/>
        <label>8</label>
    </ligand>
</feature>
<feature type="binding site" description="covalent" evidence="1 5 7 16 17 18 19 20">
    <location>
        <position position="349"/>
    </location>
    <ligand>
        <name>heme c</name>
        <dbReference type="ChEBI" id="CHEBI:61717"/>
        <label>8</label>
    </ligand>
</feature>
<feature type="binding site" description="axial binding residue" evidence="2 5 7 16 17 18 19 20">
    <location>
        <position position="350"/>
    </location>
    <ligand>
        <name>heme c</name>
        <dbReference type="ChEBI" id="CHEBI:61717"/>
        <label>8</label>
    </ligand>
    <ligandPart>
        <name>Fe</name>
        <dbReference type="ChEBI" id="CHEBI:18248"/>
    </ligandPart>
</feature>
<feature type="binding site" description="axial binding residue" evidence="2 5 7 16 17 18 19 20">
    <location>
        <position position="443"/>
    </location>
    <ligand>
        <name>heme c</name>
        <dbReference type="ChEBI" id="CHEBI:61717"/>
        <label>7</label>
    </ligand>
    <ligandPart>
        <name>Fe</name>
        <dbReference type="ChEBI" id="CHEBI:18248"/>
    </ligandPart>
</feature>
<feature type="binding site" description="covalent; ligand shared between tetrameric partners" evidence="5 7">
    <location>
        <position position="451"/>
    </location>
    <ligand>
        <name>heme c</name>
        <dbReference type="ChEBI" id="CHEBI:61717"/>
        <label>4</label>
    </ligand>
</feature>
<feature type="helix" evidence="21">
    <location>
        <begin position="41"/>
        <end position="49"/>
    </location>
</feature>
<feature type="helix" evidence="21">
    <location>
        <begin position="56"/>
        <end position="58"/>
    </location>
</feature>
<feature type="helix" evidence="21">
    <location>
        <begin position="63"/>
        <end position="65"/>
    </location>
</feature>
<feature type="turn" evidence="21">
    <location>
        <begin position="81"/>
        <end position="85"/>
    </location>
</feature>
<feature type="helix" evidence="21">
    <location>
        <begin position="90"/>
        <end position="94"/>
    </location>
</feature>
<feature type="helix" evidence="21">
    <location>
        <begin position="97"/>
        <end position="100"/>
    </location>
</feature>
<feature type="helix" evidence="21">
    <location>
        <begin position="113"/>
        <end position="123"/>
    </location>
</feature>
<feature type="helix" evidence="21">
    <location>
        <begin position="125"/>
        <end position="132"/>
    </location>
</feature>
<feature type="turn" evidence="21">
    <location>
        <begin position="135"/>
        <end position="137"/>
    </location>
</feature>
<feature type="helix" evidence="21">
    <location>
        <begin position="139"/>
        <end position="141"/>
    </location>
</feature>
<feature type="helix" evidence="21">
    <location>
        <begin position="160"/>
        <end position="164"/>
    </location>
</feature>
<feature type="helix" evidence="21">
    <location>
        <begin position="176"/>
        <end position="180"/>
    </location>
</feature>
<feature type="helix" evidence="21">
    <location>
        <begin position="184"/>
        <end position="190"/>
    </location>
</feature>
<feature type="helix" evidence="21">
    <location>
        <begin position="198"/>
        <end position="200"/>
    </location>
</feature>
<feature type="turn" evidence="21">
    <location>
        <begin position="201"/>
        <end position="208"/>
    </location>
</feature>
<feature type="helix" evidence="21">
    <location>
        <begin position="210"/>
        <end position="213"/>
    </location>
</feature>
<feature type="helix" evidence="21">
    <location>
        <begin position="217"/>
        <end position="219"/>
    </location>
</feature>
<feature type="helix" evidence="21">
    <location>
        <begin position="221"/>
        <end position="232"/>
    </location>
</feature>
<feature type="strand" evidence="21">
    <location>
        <begin position="236"/>
        <end position="238"/>
    </location>
</feature>
<feature type="turn" evidence="21">
    <location>
        <begin position="240"/>
        <end position="242"/>
    </location>
</feature>
<feature type="helix" evidence="21">
    <location>
        <begin position="245"/>
        <end position="248"/>
    </location>
</feature>
<feature type="helix" evidence="21">
    <location>
        <begin position="251"/>
        <end position="253"/>
    </location>
</feature>
<feature type="turn" evidence="21">
    <location>
        <begin position="254"/>
        <end position="257"/>
    </location>
</feature>
<feature type="helix" evidence="21">
    <location>
        <begin position="265"/>
        <end position="270"/>
    </location>
</feature>
<feature type="helix" evidence="21">
    <location>
        <begin position="273"/>
        <end position="281"/>
    </location>
</feature>
<feature type="turn" evidence="21">
    <location>
        <begin position="282"/>
        <end position="284"/>
    </location>
</feature>
<feature type="helix" evidence="21">
    <location>
        <begin position="301"/>
        <end position="305"/>
    </location>
</feature>
<feature type="helix" evidence="21">
    <location>
        <begin position="307"/>
        <end position="309"/>
    </location>
</feature>
<feature type="helix" evidence="21">
    <location>
        <begin position="313"/>
        <end position="316"/>
    </location>
</feature>
<feature type="turn" evidence="21">
    <location>
        <begin position="322"/>
        <end position="325"/>
    </location>
</feature>
<feature type="helix" evidence="21">
    <location>
        <begin position="333"/>
        <end position="335"/>
    </location>
</feature>
<feature type="helix" evidence="21">
    <location>
        <begin position="336"/>
        <end position="346"/>
    </location>
</feature>
<feature type="turn" evidence="22">
    <location>
        <begin position="347"/>
        <end position="349"/>
    </location>
</feature>
<feature type="helix" evidence="21">
    <location>
        <begin position="352"/>
        <end position="385"/>
    </location>
</feature>
<feature type="helix" evidence="21">
    <location>
        <begin position="393"/>
        <end position="395"/>
    </location>
</feature>
<feature type="strand" evidence="21">
    <location>
        <begin position="416"/>
        <end position="419"/>
    </location>
</feature>
<feature type="helix" evidence="21">
    <location>
        <begin position="421"/>
        <end position="431"/>
    </location>
</feature>
<feature type="helix" evidence="21">
    <location>
        <begin position="434"/>
        <end position="442"/>
    </location>
</feature>
<feature type="helix" evidence="21">
    <location>
        <begin position="446"/>
        <end position="450"/>
    </location>
</feature>
<feature type="helix" evidence="21">
    <location>
        <begin position="456"/>
        <end position="483"/>
    </location>
</feature>
<feature type="helix" evidence="21">
    <location>
        <begin position="491"/>
        <end position="493"/>
    </location>
</feature>
<feature type="helix" evidence="21">
    <location>
        <begin position="499"/>
        <end position="501"/>
    </location>
</feature>
<feature type="helix" evidence="21">
    <location>
        <begin position="503"/>
        <end position="506"/>
    </location>
</feature>
<feature type="helix" evidence="21">
    <location>
        <begin position="514"/>
        <end position="518"/>
    </location>
</feature>
<feature type="strand" evidence="21">
    <location>
        <begin position="520"/>
        <end position="522"/>
    </location>
</feature>
<dbReference type="EC" id="1.7.2.9" evidence="4 5"/>
<dbReference type="EMBL" id="CT573073">
    <property type="protein sequence ID" value="CAJ71806.1"/>
    <property type="molecule type" value="Genomic_DNA"/>
</dbReference>
<dbReference type="EMBL" id="LT934425">
    <property type="protein sequence ID" value="SOH05157.1"/>
    <property type="molecule type" value="Genomic_DNA"/>
</dbReference>
<dbReference type="EMBL" id="CP049055">
    <property type="protein sequence ID" value="QII13707.1"/>
    <property type="molecule type" value="Genomic_DNA"/>
</dbReference>
<dbReference type="EMBL" id="JACFOC010000134">
    <property type="protein sequence ID" value="MBW7941706.1"/>
    <property type="molecule type" value="Genomic_DNA"/>
</dbReference>
<dbReference type="RefSeq" id="WP_099325788.1">
    <property type="nucleotide sequence ID" value="NZ_CP049055.1"/>
</dbReference>
<dbReference type="PDB" id="4N4J">
    <property type="method" value="X-ray"/>
    <property type="resolution" value="1.80 A"/>
    <property type="chains" value="A=37-536"/>
</dbReference>
<dbReference type="PDB" id="4N4K">
    <property type="method" value="X-ray"/>
    <property type="resolution" value="2.20 A"/>
    <property type="chains" value="A=37-536"/>
</dbReference>
<dbReference type="PDB" id="4N4L">
    <property type="method" value="X-ray"/>
    <property type="resolution" value="1.90 A"/>
    <property type="chains" value="A=37-536"/>
</dbReference>
<dbReference type="PDB" id="4N4M">
    <property type="method" value="X-ray"/>
    <property type="resolution" value="2.10 A"/>
    <property type="chains" value="A=37-536"/>
</dbReference>
<dbReference type="PDB" id="4RWM">
    <property type="method" value="X-ray"/>
    <property type="resolution" value="1.80 A"/>
    <property type="chains" value="A=37-536"/>
</dbReference>
<dbReference type="PDBsum" id="4N4J"/>
<dbReference type="PDBsum" id="4N4K"/>
<dbReference type="PDBsum" id="4N4L"/>
<dbReference type="PDBsum" id="4N4M"/>
<dbReference type="PDBsum" id="4RWM"/>
<dbReference type="SMR" id="Q1PX48"/>
<dbReference type="KEGG" id="kst:KSMBR1_2670"/>
<dbReference type="OrthoDB" id="223737at2"/>
<dbReference type="BioCyc" id="MetaCyc:MONOMER-21799"/>
<dbReference type="EvolutionaryTrace" id="Q1PX48"/>
<dbReference type="Proteomes" id="UP000221734">
    <property type="component" value="Chromosome Kuenenia_stuttgartiensis_MBR1"/>
</dbReference>
<dbReference type="Proteomes" id="UP000501926">
    <property type="component" value="Chromosome"/>
</dbReference>
<dbReference type="GO" id="GO:0044222">
    <property type="term" value="C:anammoxosome"/>
    <property type="evidence" value="ECO:0000314"/>
    <property type="project" value="CACAO"/>
</dbReference>
<dbReference type="GO" id="GO:0020037">
    <property type="term" value="F:heme binding"/>
    <property type="evidence" value="ECO:0000314"/>
    <property type="project" value="UniProtKB"/>
</dbReference>
<dbReference type="GO" id="GO:0033740">
    <property type="term" value="F:hydroxylamine oxidoreductase activity"/>
    <property type="evidence" value="ECO:0000314"/>
    <property type="project" value="UniProtKB"/>
</dbReference>
<dbReference type="GO" id="GO:0042802">
    <property type="term" value="F:identical protein binding"/>
    <property type="evidence" value="ECO:0000314"/>
    <property type="project" value="UniProtKB"/>
</dbReference>
<dbReference type="GO" id="GO:0046872">
    <property type="term" value="F:metal ion binding"/>
    <property type="evidence" value="ECO:0007669"/>
    <property type="project" value="UniProtKB-KW"/>
</dbReference>
<dbReference type="GO" id="GO:0019331">
    <property type="term" value="P:anaerobic respiration, using ammonium as electron donor"/>
    <property type="evidence" value="ECO:0000314"/>
    <property type="project" value="CACAO"/>
</dbReference>
<dbReference type="GO" id="GO:0006809">
    <property type="term" value="P:nitric oxide biosynthetic process"/>
    <property type="evidence" value="ECO:0000314"/>
    <property type="project" value="UniProtKB"/>
</dbReference>
<dbReference type="GO" id="GO:0070207">
    <property type="term" value="P:protein homotrimerization"/>
    <property type="evidence" value="ECO:0000314"/>
    <property type="project" value="UniProtKB"/>
</dbReference>
<dbReference type="Gene3D" id="1.10.780.10">
    <property type="entry name" value="Hydroxylamine Oxidoreductase, Chain A, domain 1"/>
    <property type="match status" value="1"/>
</dbReference>
<dbReference type="Gene3D" id="1.20.850.10">
    <property type="entry name" value="Hydroxylamine Oxidoreductase, Chain A, domain 2"/>
    <property type="match status" value="1"/>
</dbReference>
<dbReference type="InterPro" id="IPR012138">
    <property type="entry name" value="HAO"/>
</dbReference>
<dbReference type="InterPro" id="IPR054394">
    <property type="entry name" value="Hao_C"/>
</dbReference>
<dbReference type="InterPro" id="IPR036280">
    <property type="entry name" value="Multihaem_cyt_sf"/>
</dbReference>
<dbReference type="InterPro" id="IPR051829">
    <property type="entry name" value="Multiheme_Cytochr_ET"/>
</dbReference>
<dbReference type="PANTHER" id="PTHR35038">
    <property type="entry name" value="DISSIMILATORY SULFITE REDUCTASE SIRA"/>
    <property type="match status" value="1"/>
</dbReference>
<dbReference type="PANTHER" id="PTHR35038:SF6">
    <property type="entry name" value="SURFACE LOCALIZED DECAHEME CYTOCHROME C LIPOPROTEIN"/>
    <property type="match status" value="1"/>
</dbReference>
<dbReference type="Pfam" id="PF22142">
    <property type="entry name" value="Hao_C"/>
    <property type="match status" value="1"/>
</dbReference>
<dbReference type="Pfam" id="PF13447">
    <property type="entry name" value="Multi-haem_cyto"/>
    <property type="match status" value="1"/>
</dbReference>
<dbReference type="PIRSF" id="PIRSF000242">
    <property type="entry name" value="HAO"/>
    <property type="match status" value="1"/>
</dbReference>
<dbReference type="SUPFAM" id="SSF48695">
    <property type="entry name" value="Multiheme cytochromes"/>
    <property type="match status" value="1"/>
</dbReference>
<dbReference type="PROSITE" id="PS51257">
    <property type="entry name" value="PROKAR_LIPOPROTEIN"/>
    <property type="match status" value="1"/>
</dbReference>
<accession>Q1PX48</accession>
<gene>
    <name evidence="8" type="primary">hao</name>
    <name evidence="14" type="synonym">hao_3</name>
    <name evidence="9" type="synonym">hox</name>
    <name evidence="12" type="ORF">H3C64_04740</name>
    <name evidence="13" type="ORF">KsCSTR_43280</name>
    <name evidence="14" type="ORF">KSMBR1_2670</name>
    <name evidence="8" type="ORF">kustc1061</name>
</gene>
<sequence length="536" mass="60243">MFEIFKKPLSRIVGATFAFAGVTLLACAMENGVAMAEGPTFQDVASQVFGQPVGPDNDGTLYIFGLTAKYTEPEYVDGRGPYKSFLKMLPSIRWYDPEHYWTNGSQTEGVFKNEECVLCHTVQTPTIVNDWKQSSHGSKDIRRGIGIKKDGKPVEDLVGCADCHGNNHQKLEMPTYKLCNDCHPKETAEHRAGGLGSHTHAYTVNVLEFSWHVGKPAEEVTGCAHCHAIAENRCSGCHTRHKFDPAEARKPTACRVCHMGIDHDEWAMYNTSIHGALYEAESARMDWGKKLKKGNYRVPTCAYCHMQNGDHNPQRFGTIYSDMGMFQVDRGAPKHKAKRDSWIKLCQDCHSPRFAADKLKEMDAGVNLSFTKWREAAAVIVGCYLDGVVDPMPEGSAPDWYGHYTFSLLPGGDPRFYATSNLERLGLEMICYLTGNVYKAYAHMSMYNQTYGNGSAFEQDRKLVEIKTEAAKLRRFAAIEKKIGLEHKSADFWKHGEYLDLLPGWKRKPGDVDVEWFKRTDIPHRANADAGVEIHH</sequence>
<protein>
    <recommendedName>
        <fullName evidence="8">Hydroxylamine oxidoreductase</fullName>
        <ecNumber evidence="4 5">1.7.2.9</ecNumber>
    </recommendedName>
</protein>
<reference evidence="11" key="1">
    <citation type="journal article" date="2006" name="Nature">
        <title>Deciphering the evolution and metabolism of an anammox bacterium from a community genome.</title>
        <authorList>
            <person name="Strous M."/>
            <person name="Pelletier E."/>
            <person name="Mangenot S."/>
            <person name="Rattei T."/>
            <person name="Lehner A."/>
            <person name="Taylor M.W."/>
            <person name="Horn M."/>
            <person name="Daims H."/>
            <person name="Bartol-Mavel D."/>
            <person name="Wincker P."/>
            <person name="Barbe V."/>
            <person name="Fonknechten N."/>
            <person name="Vallenet D."/>
            <person name="Segurens B."/>
            <person name="Schenowitz-Truong C."/>
            <person name="Medigue C."/>
            <person name="Collingro A."/>
            <person name="Snel B."/>
            <person name="Dutilh B.E."/>
            <person name="Op den Camp H.J."/>
            <person name="van der Drift C."/>
            <person name="Cirpus I."/>
            <person name="van de Pas-Schoonen K.T."/>
            <person name="Harhangi H.R."/>
            <person name="van Niftrik L."/>
            <person name="Schmid M."/>
            <person name="Keltjens J."/>
            <person name="van de Vossenberg J."/>
            <person name="Kartal B."/>
            <person name="Meier H."/>
            <person name="Frishman D."/>
            <person name="Huynen M.A."/>
            <person name="Mewes H."/>
            <person name="Weissenbach J."/>
            <person name="Jetten M.S.M."/>
            <person name="Wagner M."/>
            <person name="Le Paslier D."/>
        </authorList>
    </citation>
    <scope>NUCLEOTIDE SEQUENCE [LARGE SCALE GENOMIC DNA]</scope>
</reference>
<reference evidence="15" key="2">
    <citation type="submission" date="2017-10" db="EMBL/GenBank/DDBJ databases">
        <authorList>
            <person name="Frank J."/>
        </authorList>
    </citation>
    <scope>NUCLEOTIDE SEQUENCE [LARGE SCALE GENOMIC DNA]</scope>
    <source>
        <strain>kuenenia_mbr1_ru-nijmegen</strain>
    </source>
</reference>
<reference key="3">
    <citation type="submission" date="2020-02" db="EMBL/GenBank/DDBJ databases">
        <title>Newly sequenced genome of strain CSTR1 showed variability in Candidatus Kuenenia stuttgartiensis genomes.</title>
        <authorList>
            <person name="Ding C."/>
            <person name="Adrian L."/>
        </authorList>
    </citation>
    <scope>NUCLEOTIDE SEQUENCE [LARGE SCALE GENOMIC DNA]</scope>
    <source>
        <strain>CSTR1</strain>
    </source>
</reference>
<reference evidence="12" key="4">
    <citation type="journal article" date="2022" name="ISME J.">
        <title>A general approach to explore prokaryotic protein glycosylation reveals the unique surface layer modulation of an anammox bacterium.</title>
        <authorList>
            <person name="Pabst M."/>
            <person name="Grouzdev D.S."/>
            <person name="Lawson C.E."/>
            <person name="Kleikamp H.B.C."/>
            <person name="de Ram C."/>
            <person name="Louwen R."/>
            <person name="Lin Y.M."/>
            <person name="Lucker S."/>
            <person name="van Loosdrecht M.C.M."/>
            <person name="Laureni M."/>
        </authorList>
    </citation>
    <scope>NUCLEOTIDE SEQUENCE [LARGE SCALE GENOMIC DNA]</scope>
    <source>
        <strain evidence="12">BROCD040</strain>
    </source>
</reference>
<reference evidence="10" key="5">
    <citation type="journal article" date="2011" name="Nature">
        <title>Molecular mechanism of anaerobic ammonium oxidation.</title>
        <authorList>
            <person name="Kartal B."/>
            <person name="Maalcke W.J."/>
            <person name="de Almeida N.M."/>
            <person name="Cirpus I."/>
            <person name="Gloerich J."/>
            <person name="Geerts W."/>
            <person name="Op den Camp H.J."/>
            <person name="Harhangi H.R."/>
            <person name="Janssen-Megens E.M."/>
            <person name="Francoijs K.J."/>
            <person name="Stunnenberg H.G."/>
            <person name="Keltjens J.T."/>
            <person name="Jetten M.S."/>
            <person name="Strous M."/>
        </authorList>
    </citation>
    <scope>FUNCTION</scope>
    <scope>CATALYTIC ACTIVITY</scope>
</reference>
<reference evidence="10" key="6">
    <citation type="journal article" date="2015" name="J. Bacteriol.">
        <title>Immunogold Localization of Key Metabolic Enzymes in the Anammoxosome and on the Tubule-Like Structures of Kuenenia stuttgartiensis.</title>
        <authorList>
            <person name="de Almeida N.M."/>
            <person name="Neumann S."/>
            <person name="Mesman R.J."/>
            <person name="Ferousi C."/>
            <person name="Keltjens J.T."/>
            <person name="Jetten M.S."/>
            <person name="Kartal B."/>
            <person name="van Niftrik L."/>
        </authorList>
    </citation>
    <scope>SUBUNIT</scope>
    <scope>SUBCELLULAR LOCATION</scope>
</reference>
<reference evidence="16 17 18 19" key="7">
    <citation type="journal article" date="2014" name="J. Biol. Chem.">
        <title>Structural basis of biological NO generation by octaheme oxidoreductases.</title>
        <authorList>
            <person name="Maalcke W.J."/>
            <person name="Dietl A."/>
            <person name="Marritt S.J."/>
            <person name="Butt J.N."/>
            <person name="Jetten M.S."/>
            <person name="Keltjens J.T."/>
            <person name="Barends T.R."/>
            <person name="Kartal B."/>
        </authorList>
    </citation>
    <scope>X-RAY CRYSTALLOGRAPHY (1.80 ANGSTROMS) OF 37-536 IN COMPLEX WITH HYDROXYLAMINE; HYDRAZINE AND HEME C</scope>
    <scope>FUNCTION</scope>
    <scope>CATALYTIC ACTIVITY</scope>
    <scope>COFACTOR</scope>
    <scope>BIOPHYSICOCHEMICAL PROPERTIES</scope>
    <scope>SUBUNIT</scope>
    <scope>IDENTIFICATION BY MASS SPECTROMETRY</scope>
</reference>
<reference evidence="20" key="8">
    <citation type="journal article" date="2015" name="Acta Crystallogr. D">
        <title>An unexpected reactivity of the P460 cofactor in hydroxylamine oxidoreductase.</title>
        <authorList>
            <person name="Dietl A."/>
            <person name="Maalcke W."/>
            <person name="Barends T.R."/>
        </authorList>
    </citation>
    <scope>X-RAY CRYSTALLOGRAPHY (1.80 ANGSTROMS) OF 37-536 IN COMPLEX WITH HEME C</scope>
    <scope>COFACTOR</scope>
</reference>